<protein>
    <recommendedName>
        <fullName>Type IV secretion system protein virB10</fullName>
    </recommendedName>
</protein>
<evidence type="ECO:0000255" key="1"/>
<evidence type="ECO:0000256" key="2">
    <source>
        <dbReference type="SAM" id="MobiDB-lite"/>
    </source>
</evidence>
<evidence type="ECO:0000305" key="3"/>
<organism>
    <name type="scientific">Brucella melitensis biotype 1 (strain ATCC 23456 / CCUG 17765 / NCTC 10094 / 16M)</name>
    <dbReference type="NCBI Taxonomy" id="224914"/>
    <lineage>
        <taxon>Bacteria</taxon>
        <taxon>Pseudomonadati</taxon>
        <taxon>Pseudomonadota</taxon>
        <taxon>Alphaproteobacteria</taxon>
        <taxon>Hyphomicrobiales</taxon>
        <taxon>Brucellaceae</taxon>
        <taxon>Brucella/Ochrobactrum group</taxon>
        <taxon>Brucella</taxon>
    </lineage>
</organism>
<accession>Q8YDZ0</accession>
<sequence>MTQENIPVQPGTLDGERGLPTVNENGSGRTRKVLLFLFVVGFIVVLLLLLVFHMRGNAENNPHSYKTMVQTSTVPMRTFKLPPPPPPAPPEPPAPPPAPAMPIAEPAAAALSLPPLPDDTPAKDDVLDKSASALMVVTKSSGDTVVQTTNARIQALLDSQKNTKQDAGSLGTLLHGTQTDARMASLLRNRDFLLAKGSIINCALQTRLDSTVPGMAACVVTRNMYSDNGKVLLIERGSTISGEYDANVKQGMARIYVLWTRVKTPNGVVIDLDSPGADPLGGAGLPGYIDSHFWKRFGGALMLSTIETLGRYATQKVGGGGSNQINLNTGGGESTSNLASTALKDTINIPPTLYKNQGEEIGIYIARDLDFSSVYDVKPK</sequence>
<name>VIRBA_BRUME</name>
<proteinExistence type="inferred from homology"/>
<gene>
    <name type="primary">virB10</name>
    <name type="ordered locus">BMEII0034</name>
</gene>
<dbReference type="EMBL" id="AE008918">
    <property type="protein sequence ID" value="AAL53275.1"/>
    <property type="status" value="ALT_INIT"/>
    <property type="molecule type" value="Genomic_DNA"/>
</dbReference>
<dbReference type="PIR" id="AH3513">
    <property type="entry name" value="AH3513"/>
</dbReference>
<dbReference type="RefSeq" id="WP_041594650.1">
    <property type="nucleotide sequence ID" value="NC_003318.1"/>
</dbReference>
<dbReference type="SMR" id="Q8YDZ0"/>
<dbReference type="GeneID" id="29595918"/>
<dbReference type="KEGG" id="bme:BMEII0034"/>
<dbReference type="eggNOG" id="COG2948">
    <property type="taxonomic scope" value="Bacteria"/>
</dbReference>
<dbReference type="PhylomeDB" id="Q8YDZ0"/>
<dbReference type="PRO" id="PR:Q8YDZ0"/>
<dbReference type="Proteomes" id="UP000000419">
    <property type="component" value="Chromosome II"/>
</dbReference>
<dbReference type="GO" id="GO:0005886">
    <property type="term" value="C:plasma membrane"/>
    <property type="evidence" value="ECO:0007669"/>
    <property type="project" value="UniProtKB-SubCell"/>
</dbReference>
<dbReference type="CDD" id="cd16429">
    <property type="entry name" value="VirB10"/>
    <property type="match status" value="1"/>
</dbReference>
<dbReference type="Gene3D" id="2.40.128.260">
    <property type="entry name" value="Type IV secretion system, VirB10/TraB/TrbI"/>
    <property type="match status" value="2"/>
</dbReference>
<dbReference type="InterPro" id="IPR047695">
    <property type="entry name" value="T4SS_VirB10/PtlG"/>
</dbReference>
<dbReference type="InterPro" id="IPR005498">
    <property type="entry name" value="T4SS_VirB10/TraB/TrbI"/>
</dbReference>
<dbReference type="InterPro" id="IPR042217">
    <property type="entry name" value="T4SS_VirB10/TrbI"/>
</dbReference>
<dbReference type="NCBIfam" id="NF038091">
    <property type="entry name" value="T4SS_VirB10"/>
    <property type="match status" value="1"/>
</dbReference>
<dbReference type="Pfam" id="PF03743">
    <property type="entry name" value="TrbI"/>
    <property type="match status" value="1"/>
</dbReference>
<feature type="chain" id="PRO_0000291386" description="Type IV secretion system protein virB10">
    <location>
        <begin position="1"/>
        <end position="380"/>
    </location>
</feature>
<feature type="transmembrane region" description="Helical" evidence="1">
    <location>
        <begin position="33"/>
        <end position="53"/>
    </location>
</feature>
<feature type="region of interest" description="Disordered" evidence="2">
    <location>
        <begin position="1"/>
        <end position="26"/>
    </location>
</feature>
<feature type="region of interest" description="Disordered" evidence="2">
    <location>
        <begin position="78"/>
        <end position="102"/>
    </location>
</feature>
<feature type="compositionally biased region" description="Pro residues" evidence="2">
    <location>
        <begin position="81"/>
        <end position="100"/>
    </location>
</feature>
<reference key="1">
    <citation type="journal article" date="2002" name="Proc. Natl. Acad. Sci. U.S.A.">
        <title>The genome sequence of the facultative intracellular pathogen Brucella melitensis.</title>
        <authorList>
            <person name="DelVecchio V.G."/>
            <person name="Kapatral V."/>
            <person name="Redkar R.J."/>
            <person name="Patra G."/>
            <person name="Mujer C."/>
            <person name="Los T."/>
            <person name="Ivanova N."/>
            <person name="Anderson I."/>
            <person name="Bhattacharyya A."/>
            <person name="Lykidis A."/>
            <person name="Reznik G."/>
            <person name="Jablonski L."/>
            <person name="Larsen N."/>
            <person name="D'Souza M."/>
            <person name="Bernal A."/>
            <person name="Mazur M."/>
            <person name="Goltsman E."/>
            <person name="Selkov E."/>
            <person name="Elzer P.H."/>
            <person name="Hagius S."/>
            <person name="O'Callaghan D."/>
            <person name="Letesson J.-J."/>
            <person name="Haselkorn R."/>
            <person name="Kyrpides N.C."/>
            <person name="Overbeek R."/>
        </authorList>
    </citation>
    <scope>NUCLEOTIDE SEQUENCE [LARGE SCALE GENOMIC DNA]</scope>
    <source>
        <strain>ATCC 23456 / CCUG 17765 / NCTC 10094 / 16M</strain>
    </source>
</reference>
<comment type="subcellular location">
    <subcellularLocation>
        <location evidence="3">Cell membrane</location>
        <topology evidence="3">Single-pass membrane protein</topology>
    </subcellularLocation>
</comment>
<comment type="similarity">
    <text evidence="3">Belongs to the TrbI/VirB10 family.</text>
</comment>
<comment type="sequence caution" evidence="3">
    <conflict type="erroneous initiation">
        <sequence resource="EMBL-CDS" id="AAL53275"/>
    </conflict>
</comment>
<keyword id="KW-1003">Cell membrane</keyword>
<keyword id="KW-0472">Membrane</keyword>
<keyword id="KW-0812">Transmembrane</keyword>
<keyword id="KW-1133">Transmembrane helix</keyword>
<keyword id="KW-0843">Virulence</keyword>